<organism>
    <name type="scientific">Brucella anthropi (strain ATCC 49188 / DSM 6882 / CCUG 24695 / JCM 21032 / LMG 3331 / NBRC 15819 / NCTC 12168 / Alc 37)</name>
    <name type="common">Ochrobactrum anthropi</name>
    <dbReference type="NCBI Taxonomy" id="439375"/>
    <lineage>
        <taxon>Bacteria</taxon>
        <taxon>Pseudomonadati</taxon>
        <taxon>Pseudomonadota</taxon>
        <taxon>Alphaproteobacteria</taxon>
        <taxon>Hyphomicrobiales</taxon>
        <taxon>Brucellaceae</taxon>
        <taxon>Brucella/Ochrobactrum group</taxon>
        <taxon>Brucella</taxon>
    </lineage>
</organism>
<feature type="chain" id="PRO_1000021562" description="Histidine ammonia-lyase">
    <location>
        <begin position="1"/>
        <end position="511"/>
    </location>
</feature>
<feature type="modified residue" description="2,3-didehydroalanine (Ser)" evidence="1">
    <location>
        <position position="143"/>
    </location>
</feature>
<feature type="cross-link" description="5-imidazolinone (Ala-Gly)" evidence="1">
    <location>
        <begin position="142"/>
        <end position="144"/>
    </location>
</feature>
<accession>A6WYU8</accession>
<reference key="1">
    <citation type="journal article" date="2011" name="J. Bacteriol.">
        <title>Genome of Ochrobactrum anthropi ATCC 49188 T, a versatile opportunistic pathogen and symbiont of several eukaryotic hosts.</title>
        <authorList>
            <person name="Chain P.S."/>
            <person name="Lang D.M."/>
            <person name="Comerci D.J."/>
            <person name="Malfatti S.A."/>
            <person name="Vergez L.M."/>
            <person name="Shin M."/>
            <person name="Ugalde R.A."/>
            <person name="Garcia E."/>
            <person name="Tolmasky M.E."/>
        </authorList>
    </citation>
    <scope>NUCLEOTIDE SEQUENCE [LARGE SCALE GENOMIC DNA]</scope>
    <source>
        <strain>ATCC 49188 / DSM 6882 / CCUG 24695 / JCM 21032 / LMG 3331 / NBRC 15819 / NCTC 12168 / Alc 37</strain>
    </source>
</reference>
<name>HUTH_BRUA4</name>
<sequence length="511" mass="53335">MTLVLKPGSVPLETLETIYREGLPVRIDPAFHAGVEKAAARIAEIAAGDEPVYGINTGFGKLASIRIAAGDVATLQRNLILSHCCGVGEPLSENIVRLIMALKLISLGRGASGVRLEVITLIEDMLKKGVIPMIPEKGSVGASGDLAPLAHMTAAMIGEGEAFYKGERLPSAKALEKAGLKPVVLAAKEGLALINGTQTSTALALAGLFRAHRAAQTALITGALSTDAAMGSDAPFHEEIHTLRGHKGQIDAGRALRALLEGSVIRQSHLEGDQRVQDPYCIRCQPQVDGACLDILRQAARTLEIEANAVTDNPLILSDGRAVSGGNFHAEPVAFAADQIALAVCEIGAISQRRIALLVDPALSFGLPAFLARKPGLNSGLMIAEVTSAALMSENKQMAHPASVDSTPTSANQEDHVSMACHGARRLLQMTANLNAIIGIEALTGALGVELREPLTTSPELAKVIAVLRGKVPTLEDDRYMADDLKNAAELVVDGALAGAVSSGILPSLEA</sequence>
<protein>
    <recommendedName>
        <fullName evidence="1">Histidine ammonia-lyase</fullName>
        <shortName evidence="1">Histidase</shortName>
        <ecNumber evidence="1">4.3.1.3</ecNumber>
    </recommendedName>
</protein>
<dbReference type="EC" id="4.3.1.3" evidence="1"/>
<dbReference type="EMBL" id="CP000758">
    <property type="protein sequence ID" value="ABS14152.1"/>
    <property type="molecule type" value="Genomic_DNA"/>
</dbReference>
<dbReference type="RefSeq" id="WP_012091500.1">
    <property type="nucleotide sequence ID" value="NC_009667.1"/>
</dbReference>
<dbReference type="SMR" id="A6WYU8"/>
<dbReference type="STRING" id="439375.Oant_1435"/>
<dbReference type="KEGG" id="oan:Oant_1435"/>
<dbReference type="PATRIC" id="fig|439375.7.peg.1504"/>
<dbReference type="eggNOG" id="COG2986">
    <property type="taxonomic scope" value="Bacteria"/>
</dbReference>
<dbReference type="HOGENOM" id="CLU_014801_4_0_5"/>
<dbReference type="PhylomeDB" id="A6WYU8"/>
<dbReference type="UniPathway" id="UPA00379">
    <property type="reaction ID" value="UER00549"/>
</dbReference>
<dbReference type="Proteomes" id="UP000002301">
    <property type="component" value="Chromosome 1"/>
</dbReference>
<dbReference type="GO" id="GO:0005737">
    <property type="term" value="C:cytoplasm"/>
    <property type="evidence" value="ECO:0007669"/>
    <property type="project" value="UniProtKB-SubCell"/>
</dbReference>
<dbReference type="GO" id="GO:0004397">
    <property type="term" value="F:histidine ammonia-lyase activity"/>
    <property type="evidence" value="ECO:0007669"/>
    <property type="project" value="UniProtKB-UniRule"/>
</dbReference>
<dbReference type="GO" id="GO:0019556">
    <property type="term" value="P:L-histidine catabolic process to glutamate and formamide"/>
    <property type="evidence" value="ECO:0007669"/>
    <property type="project" value="UniProtKB-UniPathway"/>
</dbReference>
<dbReference type="GO" id="GO:0019557">
    <property type="term" value="P:L-histidine catabolic process to glutamate and formate"/>
    <property type="evidence" value="ECO:0007669"/>
    <property type="project" value="UniProtKB-UniPathway"/>
</dbReference>
<dbReference type="CDD" id="cd00332">
    <property type="entry name" value="PAL-HAL"/>
    <property type="match status" value="1"/>
</dbReference>
<dbReference type="FunFam" id="1.10.275.10:FF:000005">
    <property type="entry name" value="Histidine ammonia-lyase"/>
    <property type="match status" value="1"/>
</dbReference>
<dbReference type="FunFam" id="1.20.200.10:FF:000003">
    <property type="entry name" value="Histidine ammonia-lyase"/>
    <property type="match status" value="1"/>
</dbReference>
<dbReference type="Gene3D" id="1.20.200.10">
    <property type="entry name" value="Fumarase/aspartase (Central domain)"/>
    <property type="match status" value="1"/>
</dbReference>
<dbReference type="Gene3D" id="1.10.275.10">
    <property type="entry name" value="Fumarase/aspartase (N-terminal domain)"/>
    <property type="match status" value="1"/>
</dbReference>
<dbReference type="HAMAP" id="MF_00229">
    <property type="entry name" value="His_ammonia_lyase"/>
    <property type="match status" value="1"/>
</dbReference>
<dbReference type="InterPro" id="IPR001106">
    <property type="entry name" value="Aromatic_Lyase"/>
</dbReference>
<dbReference type="InterPro" id="IPR024083">
    <property type="entry name" value="Fumarase/histidase_N"/>
</dbReference>
<dbReference type="InterPro" id="IPR005921">
    <property type="entry name" value="HutH"/>
</dbReference>
<dbReference type="InterPro" id="IPR008948">
    <property type="entry name" value="L-Aspartase-like"/>
</dbReference>
<dbReference type="InterPro" id="IPR022313">
    <property type="entry name" value="Phe/His_NH3-lyase_AS"/>
</dbReference>
<dbReference type="NCBIfam" id="TIGR01225">
    <property type="entry name" value="hutH"/>
    <property type="match status" value="1"/>
</dbReference>
<dbReference type="NCBIfam" id="NF006871">
    <property type="entry name" value="PRK09367.1"/>
    <property type="match status" value="1"/>
</dbReference>
<dbReference type="PANTHER" id="PTHR10362">
    <property type="entry name" value="HISTIDINE AMMONIA-LYASE"/>
    <property type="match status" value="1"/>
</dbReference>
<dbReference type="Pfam" id="PF00221">
    <property type="entry name" value="Lyase_aromatic"/>
    <property type="match status" value="1"/>
</dbReference>
<dbReference type="SUPFAM" id="SSF48557">
    <property type="entry name" value="L-aspartase-like"/>
    <property type="match status" value="1"/>
</dbReference>
<dbReference type="PROSITE" id="PS00488">
    <property type="entry name" value="PAL_HISTIDASE"/>
    <property type="match status" value="1"/>
</dbReference>
<gene>
    <name evidence="1" type="primary">hutH</name>
    <name type="ordered locus">Oant_1435</name>
</gene>
<proteinExistence type="inferred from homology"/>
<keyword id="KW-0963">Cytoplasm</keyword>
<keyword id="KW-0369">Histidine metabolism</keyword>
<keyword id="KW-0456">Lyase</keyword>
<keyword id="KW-1185">Reference proteome</keyword>
<evidence type="ECO:0000255" key="1">
    <source>
        <dbReference type="HAMAP-Rule" id="MF_00229"/>
    </source>
</evidence>
<comment type="catalytic activity">
    <reaction evidence="1">
        <text>L-histidine = trans-urocanate + NH4(+)</text>
        <dbReference type="Rhea" id="RHEA:21232"/>
        <dbReference type="ChEBI" id="CHEBI:17771"/>
        <dbReference type="ChEBI" id="CHEBI:28938"/>
        <dbReference type="ChEBI" id="CHEBI:57595"/>
        <dbReference type="EC" id="4.3.1.3"/>
    </reaction>
</comment>
<comment type="pathway">
    <text evidence="1">Amino-acid degradation; L-histidine degradation into L-glutamate; N-formimidoyl-L-glutamate from L-histidine: step 1/3.</text>
</comment>
<comment type="subcellular location">
    <subcellularLocation>
        <location evidence="1">Cytoplasm</location>
    </subcellularLocation>
</comment>
<comment type="PTM">
    <text evidence="1">Contains an active site 4-methylidene-imidazol-5-one (MIO), which is formed autocatalytically by cyclization and dehydration of residues Ala-Ser-Gly.</text>
</comment>
<comment type="similarity">
    <text evidence="1">Belongs to the PAL/histidase family.</text>
</comment>